<reference key="1">
    <citation type="submission" date="2002-11" db="EMBL/GenBank/DDBJ databases">
        <title>Isolation, characterization and expression of stromelysin-1 (MMP3) in canine tumors.</title>
        <authorList>
            <person name="Sorensen K.C."/>
            <person name="Balkin R.G."/>
            <person name="Ktichell B.E."/>
            <person name="Siegel A.M."/>
            <person name="Schaeffer D."/>
        </authorList>
    </citation>
    <scope>NUCLEOTIDE SEQUENCE [MRNA]</scope>
</reference>
<dbReference type="EC" id="3.4.24.17"/>
<dbReference type="EMBL" id="AY183143">
    <property type="protein sequence ID" value="AAO63580.1"/>
    <property type="molecule type" value="mRNA"/>
</dbReference>
<dbReference type="RefSeq" id="NP_001002967.1">
    <property type="nucleotide sequence ID" value="NM_001002967.1"/>
</dbReference>
<dbReference type="SMR" id="Q6Y4Q5"/>
<dbReference type="FunCoup" id="Q6Y4Q5">
    <property type="interactions" value="49"/>
</dbReference>
<dbReference type="STRING" id="9615.ENSCAFP00000022195"/>
<dbReference type="MEROPS" id="M10.005"/>
<dbReference type="GlyCosmos" id="Q6Y4Q5">
    <property type="glycosylation" value="1 site, No reported glycans"/>
</dbReference>
<dbReference type="PaxDb" id="9612-ENSCAFP00000022195"/>
<dbReference type="Ensembl" id="ENSCAFT00000023908.3">
    <property type="protein sequence ID" value="ENSCAFP00000022195.1"/>
    <property type="gene ID" value="ENSCAFG00000015063.3"/>
</dbReference>
<dbReference type="Ensembl" id="ENSCAFT00030025210.1">
    <property type="protein sequence ID" value="ENSCAFP00030022012.1"/>
    <property type="gene ID" value="ENSCAFG00030013617.1"/>
</dbReference>
<dbReference type="Ensembl" id="ENSCAFT00040038011.1">
    <property type="protein sequence ID" value="ENSCAFP00040033135.1"/>
    <property type="gene ID" value="ENSCAFG00040020536.1"/>
</dbReference>
<dbReference type="Ensembl" id="ENSCAFT00845001397.1">
    <property type="protein sequence ID" value="ENSCAFP00845001083.1"/>
    <property type="gene ID" value="ENSCAFG00845000842.1"/>
</dbReference>
<dbReference type="GeneID" id="403445"/>
<dbReference type="KEGG" id="cfa:403445"/>
<dbReference type="CTD" id="4314"/>
<dbReference type="VEuPathDB" id="HostDB:ENSCAFG00845000842"/>
<dbReference type="eggNOG" id="KOG1565">
    <property type="taxonomic scope" value="Eukaryota"/>
</dbReference>
<dbReference type="GeneTree" id="ENSGT00940000159759"/>
<dbReference type="HOGENOM" id="CLU_015489_6_0_1"/>
<dbReference type="InParanoid" id="Q6Y4Q5"/>
<dbReference type="OMA" id="NFVQQYL"/>
<dbReference type="OrthoDB" id="406838at2759"/>
<dbReference type="TreeFam" id="TF315428"/>
<dbReference type="Reactome" id="R-CFA-1442490">
    <property type="pathway name" value="Collagen degradation"/>
</dbReference>
<dbReference type="Reactome" id="R-CFA-1474228">
    <property type="pathway name" value="Degradation of the extracellular matrix"/>
</dbReference>
<dbReference type="Reactome" id="R-CFA-1592389">
    <property type="pathway name" value="Activation of Matrix Metalloproteinases"/>
</dbReference>
<dbReference type="Reactome" id="R-CFA-2179392">
    <property type="pathway name" value="EGFR Transactivation by Gastrin"/>
</dbReference>
<dbReference type="Reactome" id="R-CFA-9009391">
    <property type="pathway name" value="Extra-nuclear estrogen signaling"/>
</dbReference>
<dbReference type="Proteomes" id="UP000002254">
    <property type="component" value="Chromosome 5"/>
</dbReference>
<dbReference type="Proteomes" id="UP000694429">
    <property type="component" value="Chromosome 5"/>
</dbReference>
<dbReference type="Proteomes" id="UP000694542">
    <property type="component" value="Chromosome 5"/>
</dbReference>
<dbReference type="Proteomes" id="UP000805418">
    <property type="component" value="Chromosome 5"/>
</dbReference>
<dbReference type="GO" id="GO:0005829">
    <property type="term" value="C:cytosol"/>
    <property type="evidence" value="ECO:0007669"/>
    <property type="project" value="Ensembl"/>
</dbReference>
<dbReference type="GO" id="GO:0031012">
    <property type="term" value="C:extracellular matrix"/>
    <property type="evidence" value="ECO:0007669"/>
    <property type="project" value="InterPro"/>
</dbReference>
<dbReference type="GO" id="GO:0005576">
    <property type="term" value="C:extracellular region"/>
    <property type="evidence" value="ECO:0007669"/>
    <property type="project" value="UniProtKB-KW"/>
</dbReference>
<dbReference type="GO" id="GO:0005739">
    <property type="term" value="C:mitochondrion"/>
    <property type="evidence" value="ECO:0007669"/>
    <property type="project" value="Ensembl"/>
</dbReference>
<dbReference type="GO" id="GO:0004222">
    <property type="term" value="F:metalloendopeptidase activity"/>
    <property type="evidence" value="ECO:0000318"/>
    <property type="project" value="GO_Central"/>
</dbReference>
<dbReference type="GO" id="GO:0008233">
    <property type="term" value="F:peptidase activity"/>
    <property type="evidence" value="ECO:0000250"/>
    <property type="project" value="UniProtKB"/>
</dbReference>
<dbReference type="GO" id="GO:0008270">
    <property type="term" value="F:zinc ion binding"/>
    <property type="evidence" value="ECO:0007669"/>
    <property type="project" value="InterPro"/>
</dbReference>
<dbReference type="GO" id="GO:0071230">
    <property type="term" value="P:cellular response to amino acid stimulus"/>
    <property type="evidence" value="ECO:0007669"/>
    <property type="project" value="Ensembl"/>
</dbReference>
<dbReference type="GO" id="GO:0034614">
    <property type="term" value="P:cellular response to reactive oxygen species"/>
    <property type="evidence" value="ECO:0007669"/>
    <property type="project" value="Ensembl"/>
</dbReference>
<dbReference type="GO" id="GO:0071492">
    <property type="term" value="P:cellular response to UV-A"/>
    <property type="evidence" value="ECO:0007669"/>
    <property type="project" value="Ensembl"/>
</dbReference>
<dbReference type="GO" id="GO:0030574">
    <property type="term" value="P:collagen catabolic process"/>
    <property type="evidence" value="ECO:0000318"/>
    <property type="project" value="GO_Central"/>
</dbReference>
<dbReference type="GO" id="GO:0030198">
    <property type="term" value="P:extracellular matrix organization"/>
    <property type="evidence" value="ECO:0000318"/>
    <property type="project" value="GO_Central"/>
</dbReference>
<dbReference type="GO" id="GO:0045087">
    <property type="term" value="P:innate immune response"/>
    <property type="evidence" value="ECO:0007669"/>
    <property type="project" value="UniProtKB-KW"/>
</dbReference>
<dbReference type="GO" id="GO:0051898">
    <property type="term" value="P:negative regulation of phosphatidylinositol 3-kinase/protein kinase B signal transduction"/>
    <property type="evidence" value="ECO:0007669"/>
    <property type="project" value="Ensembl"/>
</dbReference>
<dbReference type="GO" id="GO:2000378">
    <property type="term" value="P:negative regulation of reactive oxygen species metabolic process"/>
    <property type="evidence" value="ECO:0007669"/>
    <property type="project" value="Ensembl"/>
</dbReference>
<dbReference type="GO" id="GO:0031334">
    <property type="term" value="P:positive regulation of protein-containing complex assembly"/>
    <property type="evidence" value="ECO:0007669"/>
    <property type="project" value="Ensembl"/>
</dbReference>
<dbReference type="GO" id="GO:0030163">
    <property type="term" value="P:protein catabolic process"/>
    <property type="evidence" value="ECO:0007669"/>
    <property type="project" value="Ensembl"/>
</dbReference>
<dbReference type="GO" id="GO:0006508">
    <property type="term" value="P:proteolysis"/>
    <property type="evidence" value="ECO:0007669"/>
    <property type="project" value="UniProtKB-KW"/>
</dbReference>
<dbReference type="GO" id="GO:0030334">
    <property type="term" value="P:regulation of cell migration"/>
    <property type="evidence" value="ECO:0007669"/>
    <property type="project" value="Ensembl"/>
</dbReference>
<dbReference type="CDD" id="cd00094">
    <property type="entry name" value="HX"/>
    <property type="match status" value="1"/>
</dbReference>
<dbReference type="CDD" id="cd04278">
    <property type="entry name" value="ZnMc_MMP"/>
    <property type="match status" value="1"/>
</dbReference>
<dbReference type="FunFam" id="3.40.390.10:FF:000007">
    <property type="entry name" value="Collagenase 3"/>
    <property type="match status" value="1"/>
</dbReference>
<dbReference type="FunFam" id="2.110.10.10:FF:000002">
    <property type="entry name" value="Matrix metallopeptidase 3"/>
    <property type="match status" value="1"/>
</dbReference>
<dbReference type="Gene3D" id="3.40.390.10">
    <property type="entry name" value="Collagenase (Catalytic Domain)"/>
    <property type="match status" value="1"/>
</dbReference>
<dbReference type="Gene3D" id="2.110.10.10">
    <property type="entry name" value="Hemopexin-like domain"/>
    <property type="match status" value="1"/>
</dbReference>
<dbReference type="InterPro" id="IPR000585">
    <property type="entry name" value="Hemopexin-like_dom"/>
</dbReference>
<dbReference type="InterPro" id="IPR036375">
    <property type="entry name" value="Hemopexin-like_dom_sf"/>
</dbReference>
<dbReference type="InterPro" id="IPR018487">
    <property type="entry name" value="Hemopexin-like_repeat"/>
</dbReference>
<dbReference type="InterPro" id="IPR018486">
    <property type="entry name" value="Hemopexin_CS"/>
</dbReference>
<dbReference type="InterPro" id="IPR033739">
    <property type="entry name" value="M10A_MMP"/>
</dbReference>
<dbReference type="InterPro" id="IPR024079">
    <property type="entry name" value="MetalloPept_cat_dom_sf"/>
</dbReference>
<dbReference type="InterPro" id="IPR001818">
    <property type="entry name" value="Pept_M10_metallopeptidase"/>
</dbReference>
<dbReference type="InterPro" id="IPR021190">
    <property type="entry name" value="Pept_M10A"/>
</dbReference>
<dbReference type="InterPro" id="IPR021158">
    <property type="entry name" value="Pept_M10A_Zn_BS"/>
</dbReference>
<dbReference type="InterPro" id="IPR006026">
    <property type="entry name" value="Peptidase_Metallo"/>
</dbReference>
<dbReference type="InterPro" id="IPR002477">
    <property type="entry name" value="Peptidoglycan-bd-like"/>
</dbReference>
<dbReference type="InterPro" id="IPR036365">
    <property type="entry name" value="PGBD-like_sf"/>
</dbReference>
<dbReference type="PANTHER" id="PTHR10201">
    <property type="entry name" value="MATRIX METALLOPROTEINASE"/>
    <property type="match status" value="1"/>
</dbReference>
<dbReference type="PANTHER" id="PTHR10201:SF215">
    <property type="entry name" value="STROMELYSIN-1"/>
    <property type="match status" value="1"/>
</dbReference>
<dbReference type="Pfam" id="PF00045">
    <property type="entry name" value="Hemopexin"/>
    <property type="match status" value="4"/>
</dbReference>
<dbReference type="Pfam" id="PF00413">
    <property type="entry name" value="Peptidase_M10"/>
    <property type="match status" value="1"/>
</dbReference>
<dbReference type="Pfam" id="PF01471">
    <property type="entry name" value="PG_binding_1"/>
    <property type="match status" value="1"/>
</dbReference>
<dbReference type="PIRSF" id="PIRSF001191">
    <property type="entry name" value="Peptidase_M10A_matrix"/>
    <property type="match status" value="1"/>
</dbReference>
<dbReference type="PRINTS" id="PR00138">
    <property type="entry name" value="MATRIXIN"/>
</dbReference>
<dbReference type="SMART" id="SM00120">
    <property type="entry name" value="HX"/>
    <property type="match status" value="4"/>
</dbReference>
<dbReference type="SMART" id="SM00235">
    <property type="entry name" value="ZnMc"/>
    <property type="match status" value="1"/>
</dbReference>
<dbReference type="SUPFAM" id="SSF50923">
    <property type="entry name" value="Hemopexin-like domain"/>
    <property type="match status" value="1"/>
</dbReference>
<dbReference type="SUPFAM" id="SSF55486">
    <property type="entry name" value="Metalloproteases ('zincins'), catalytic domain"/>
    <property type="match status" value="1"/>
</dbReference>
<dbReference type="SUPFAM" id="SSF47090">
    <property type="entry name" value="PGBD-like"/>
    <property type="match status" value="1"/>
</dbReference>
<dbReference type="PROSITE" id="PS00546">
    <property type="entry name" value="CYSTEINE_SWITCH"/>
    <property type="match status" value="1"/>
</dbReference>
<dbReference type="PROSITE" id="PS00024">
    <property type="entry name" value="HEMOPEXIN"/>
    <property type="match status" value="1"/>
</dbReference>
<dbReference type="PROSITE" id="PS51642">
    <property type="entry name" value="HEMOPEXIN_2"/>
    <property type="match status" value="4"/>
</dbReference>
<dbReference type="PROSITE" id="PS00142">
    <property type="entry name" value="ZINC_PROTEASE"/>
    <property type="match status" value="1"/>
</dbReference>
<feature type="signal peptide" evidence="3">
    <location>
        <begin position="1"/>
        <end position="17"/>
    </location>
</feature>
<feature type="propeptide" id="PRO_0000028724" description="Activation peptide" evidence="1">
    <location>
        <begin position="18"/>
        <end position="99"/>
    </location>
</feature>
<feature type="chain" id="PRO_0000028725" description="Stromelysin-1">
    <location>
        <begin position="100"/>
        <end position="478"/>
    </location>
</feature>
<feature type="repeat" description="Hemopexin 1">
    <location>
        <begin position="288"/>
        <end position="337"/>
    </location>
</feature>
<feature type="repeat" description="Hemopexin 2">
    <location>
        <begin position="338"/>
        <end position="384"/>
    </location>
</feature>
<feature type="repeat" description="Hemopexin 3">
    <location>
        <begin position="386"/>
        <end position="434"/>
    </location>
</feature>
<feature type="repeat" description="Hemopexin 4">
    <location>
        <begin position="435"/>
        <end position="478"/>
    </location>
</feature>
<feature type="region of interest" description="Disordered" evidence="5">
    <location>
        <begin position="260"/>
        <end position="286"/>
    </location>
</feature>
<feature type="short sequence motif" description="Cysteine switch" evidence="1">
    <location>
        <begin position="90"/>
        <end position="97"/>
    </location>
</feature>
<feature type="compositionally biased region" description="Low complexity" evidence="5">
    <location>
        <begin position="266"/>
        <end position="277"/>
    </location>
</feature>
<feature type="active site" evidence="4">
    <location>
        <position position="219"/>
    </location>
</feature>
<feature type="binding site" description="in inhibited form" evidence="1">
    <location>
        <position position="92"/>
    </location>
    <ligand>
        <name>Zn(2+)</name>
        <dbReference type="ChEBI" id="CHEBI:29105"/>
        <label>2</label>
        <note>catalytic</note>
    </ligand>
</feature>
<feature type="binding site" evidence="1">
    <location>
        <position position="124"/>
    </location>
    <ligand>
        <name>Ca(2+)</name>
        <dbReference type="ChEBI" id="CHEBI:29108"/>
        <label>1</label>
    </ligand>
</feature>
<feature type="binding site" evidence="1">
    <location>
        <position position="158"/>
    </location>
    <ligand>
        <name>Ca(2+)</name>
        <dbReference type="ChEBI" id="CHEBI:29108"/>
        <label>2</label>
    </ligand>
</feature>
<feature type="binding site" evidence="1">
    <location>
        <position position="168"/>
    </location>
    <ligand>
        <name>Zn(2+)</name>
        <dbReference type="ChEBI" id="CHEBI:29105"/>
        <label>1</label>
    </ligand>
</feature>
<feature type="binding site" evidence="1">
    <location>
        <position position="170"/>
    </location>
    <ligand>
        <name>Zn(2+)</name>
        <dbReference type="ChEBI" id="CHEBI:29105"/>
        <label>1</label>
    </ligand>
</feature>
<feature type="binding site" evidence="1">
    <location>
        <position position="175"/>
    </location>
    <ligand>
        <name>Ca(2+)</name>
        <dbReference type="ChEBI" id="CHEBI:29108"/>
        <label>3</label>
    </ligand>
</feature>
<feature type="binding site" evidence="1">
    <location>
        <position position="176"/>
    </location>
    <ligand>
        <name>Ca(2+)</name>
        <dbReference type="ChEBI" id="CHEBI:29108"/>
        <label>3</label>
    </ligand>
</feature>
<feature type="binding site" evidence="1">
    <location>
        <position position="178"/>
    </location>
    <ligand>
        <name>Ca(2+)</name>
        <dbReference type="ChEBI" id="CHEBI:29108"/>
        <label>3</label>
    </ligand>
</feature>
<feature type="binding site" evidence="1">
    <location>
        <position position="180"/>
    </location>
    <ligand>
        <name>Ca(2+)</name>
        <dbReference type="ChEBI" id="CHEBI:29108"/>
        <label>3</label>
    </ligand>
</feature>
<feature type="binding site" evidence="1">
    <location>
        <position position="183"/>
    </location>
    <ligand>
        <name>Zn(2+)</name>
        <dbReference type="ChEBI" id="CHEBI:29105"/>
        <label>1</label>
    </ligand>
</feature>
<feature type="binding site" evidence="1">
    <location>
        <position position="190"/>
    </location>
    <ligand>
        <name>Ca(2+)</name>
        <dbReference type="ChEBI" id="CHEBI:29108"/>
        <label>2</label>
    </ligand>
</feature>
<feature type="binding site" evidence="1">
    <location>
        <position position="194"/>
    </location>
    <ligand>
        <name>Ca(2+)</name>
        <dbReference type="ChEBI" id="CHEBI:29108"/>
        <label>2</label>
    </ligand>
</feature>
<feature type="binding site" evidence="1">
    <location>
        <position position="196"/>
    </location>
    <ligand>
        <name>Zn(2+)</name>
        <dbReference type="ChEBI" id="CHEBI:29105"/>
        <label>1</label>
    </ligand>
</feature>
<feature type="binding site" evidence="1">
    <location>
        <position position="198"/>
    </location>
    <ligand>
        <name>Ca(2+)</name>
        <dbReference type="ChEBI" id="CHEBI:29108"/>
        <label>3</label>
    </ligand>
</feature>
<feature type="binding site" evidence="1">
    <location>
        <position position="199"/>
    </location>
    <ligand>
        <name>Ca(2+)</name>
        <dbReference type="ChEBI" id="CHEBI:29108"/>
        <label>1</label>
    </ligand>
</feature>
<feature type="binding site" evidence="1">
    <location>
        <position position="201"/>
    </location>
    <ligand>
        <name>Ca(2+)</name>
        <dbReference type="ChEBI" id="CHEBI:29108"/>
        <label>1</label>
    </ligand>
</feature>
<feature type="binding site" evidence="1">
    <location>
        <position position="201"/>
    </location>
    <ligand>
        <name>Ca(2+)</name>
        <dbReference type="ChEBI" id="CHEBI:29108"/>
        <label>3</label>
    </ligand>
</feature>
<feature type="binding site" evidence="1">
    <location>
        <position position="218"/>
    </location>
    <ligand>
        <name>Zn(2+)</name>
        <dbReference type="ChEBI" id="CHEBI:29105"/>
        <label>2</label>
        <note>catalytic</note>
    </ligand>
</feature>
<feature type="binding site" evidence="1">
    <location>
        <position position="222"/>
    </location>
    <ligand>
        <name>Zn(2+)</name>
        <dbReference type="ChEBI" id="CHEBI:29105"/>
        <label>2</label>
        <note>catalytic</note>
    </ligand>
</feature>
<feature type="binding site" evidence="1">
    <location>
        <position position="228"/>
    </location>
    <ligand>
        <name>Zn(2+)</name>
        <dbReference type="ChEBI" id="CHEBI:29105"/>
        <label>2</label>
        <note>catalytic</note>
    </ligand>
</feature>
<feature type="binding site" evidence="1">
    <location>
        <position position="298"/>
    </location>
    <ligand>
        <name>Ca(2+)</name>
        <dbReference type="ChEBI" id="CHEBI:29108"/>
        <label>4</label>
    </ligand>
</feature>
<feature type="binding site" evidence="1">
    <location>
        <position position="390"/>
    </location>
    <ligand>
        <name>Ca(2+)</name>
        <dbReference type="ChEBI" id="CHEBI:29108"/>
        <label>4</label>
    </ligand>
</feature>
<feature type="binding site" evidence="1">
    <location>
        <position position="439"/>
    </location>
    <ligand>
        <name>Ca(2+)</name>
        <dbReference type="ChEBI" id="CHEBI:29108"/>
        <label>4</label>
    </ligand>
</feature>
<feature type="glycosylation site" description="N-linked (GlcNAc...) asparagine" evidence="3">
    <location>
        <position position="452"/>
    </location>
</feature>
<feature type="disulfide bond" evidence="1">
    <location>
        <begin position="291"/>
        <end position="478"/>
    </location>
</feature>
<organism>
    <name type="scientific">Canis lupus familiaris</name>
    <name type="common">Dog</name>
    <name type="synonym">Canis familiaris</name>
    <dbReference type="NCBI Taxonomy" id="9615"/>
    <lineage>
        <taxon>Eukaryota</taxon>
        <taxon>Metazoa</taxon>
        <taxon>Chordata</taxon>
        <taxon>Craniata</taxon>
        <taxon>Vertebrata</taxon>
        <taxon>Euteleostomi</taxon>
        <taxon>Mammalia</taxon>
        <taxon>Eutheria</taxon>
        <taxon>Laurasiatheria</taxon>
        <taxon>Carnivora</taxon>
        <taxon>Caniformia</taxon>
        <taxon>Canidae</taxon>
        <taxon>Canis</taxon>
    </lineage>
</organism>
<evidence type="ECO:0000250" key="1"/>
<evidence type="ECO:0000250" key="2">
    <source>
        <dbReference type="UniProtKB" id="P08254"/>
    </source>
</evidence>
<evidence type="ECO:0000255" key="3"/>
<evidence type="ECO:0000255" key="4">
    <source>
        <dbReference type="PROSITE-ProRule" id="PRU10095"/>
    </source>
</evidence>
<evidence type="ECO:0000256" key="5">
    <source>
        <dbReference type="SAM" id="MobiDB-lite"/>
    </source>
</evidence>
<evidence type="ECO:0000305" key="6"/>
<comment type="function">
    <text evidence="2">Metalloproteinase with a rather broad substrate specificity that can degrade fibronectin, laminin, gelatins of type I, III, IV, and V; collagens III, IV, X, and IX, and cartilage proteoglycans. Activates different molecules including growth factors, plasminogen or other matrix metalloproteinases such as MMP9. Once released into the extracellular matrix (ECM), the inactive pro-enzyme is activated by the plasmin cascade signaling pathway. Also acts intracellularly. For example, in dopaminergic neurons, gets activated by the serine protease HTRA2 upon stress and plays a pivotal role in DA neuronal degeneration by mediating microglial activation and alpha-synuclein/SNCA cleavage. In addition, plays a role in immune response and possesses antiviral activity against various viruses. Mechanistically, translocates from the cytoplasm into the cell nucleus upon virus infection to influence NF-kappa-B activities.</text>
</comment>
<comment type="catalytic activity">
    <reaction evidence="2">
        <text>Preferential cleavage where P1', P2' and P3' are hydrophobic residues.</text>
        <dbReference type="EC" id="3.4.24.17"/>
    </reaction>
</comment>
<comment type="cofactor">
    <cofactor evidence="1">
        <name>Ca(2+)</name>
        <dbReference type="ChEBI" id="CHEBI:29108"/>
    </cofactor>
    <text evidence="1">Binds 4 Ca(2+) ions per subunit.</text>
</comment>
<comment type="cofactor">
    <cofactor evidence="1">
        <name>Zn(2+)</name>
        <dbReference type="ChEBI" id="CHEBI:29105"/>
    </cofactor>
    <text evidence="1">Binds 2 Zn(2+) ions per subunit.</text>
</comment>
<comment type="subcellular location">
    <subcellularLocation>
        <location evidence="1">Secreted</location>
        <location evidence="1">Extracellular space</location>
        <location evidence="1">Extracellular matrix</location>
    </subcellularLocation>
</comment>
<comment type="domain">
    <text>The conserved cysteine present in the cysteine-switch motif binds the catalytic zinc ion, thus inhibiting the enzyme. The dissociation of the cysteine from the zinc ion upon the activation-peptide release activates the enzyme.</text>
</comment>
<comment type="similarity">
    <text evidence="6">Belongs to the peptidase M10A family.</text>
</comment>
<gene>
    <name type="primary">MMP3</name>
</gene>
<name>MMP3_CANLF</name>
<proteinExistence type="evidence at transcript level"/>
<accession>Q6Y4Q5</accession>
<keyword id="KW-0106">Calcium</keyword>
<keyword id="KW-0177">Collagen degradation</keyword>
<keyword id="KW-1015">Disulfide bond</keyword>
<keyword id="KW-0272">Extracellular matrix</keyword>
<keyword id="KW-0325">Glycoprotein</keyword>
<keyword id="KW-0378">Hydrolase</keyword>
<keyword id="KW-0391">Immunity</keyword>
<keyword id="KW-0399">Innate immunity</keyword>
<keyword id="KW-0479">Metal-binding</keyword>
<keyword id="KW-0482">Metalloprotease</keyword>
<keyword id="KW-0645">Protease</keyword>
<keyword id="KW-1185">Reference proteome</keyword>
<keyword id="KW-0677">Repeat</keyword>
<keyword id="KW-0964">Secreted</keyword>
<keyword id="KW-0732">Signal</keyword>
<keyword id="KW-0862">Zinc</keyword>
<keyword id="KW-0865">Zymogen</keyword>
<protein>
    <recommendedName>
        <fullName>Stromelysin-1</fullName>
        <shortName>SL-1</shortName>
        <ecNumber>3.4.24.17</ecNumber>
    </recommendedName>
    <alternativeName>
        <fullName>Matrix metalloproteinase-3</fullName>
        <shortName>MMP-3</shortName>
    </alternativeName>
</protein>
<sequence>MQNLPALLLFCGVVCSAYPVDRAAEDENNNMELTQQYLENYYNLGKDVKPFVRRRNSGPVVEKIREMQKFLGLEVTGKVDSDTLAMMRRPRCGVPDVGDFTTFPGMPKWRKTHLTYRIMNYTPDLPRDAVDSAIEKALNVWKEVTPLTFSRTDEGEADIKISFAVRDHGDFNPFDGPGNVLGHAYPPGPGIYGDAHFDDDEQWTSDTSGTNLFLVAAHELGHSLGLFHSADPSALMYPVYNVLADLARFHLSQDDVNGIQSLYGGPPSDSSNDPVVPTESVPPGPGTPAACDPTLSFDAISTLRGEFLFFKDRHFWRKSLRTLEPGFYLISSFWPSLPSGLDAAYEETSKDIVFIFKGNQFWAMRGTEVQAGYPKGIHTLGFPPTVKKIDAAVFDKEKKKTYFFVGDKYWRFDEKRQSMEPGFPKQIAEDFPGVDSKVDAAFEAFGFYYFFNGSSQLEFDPNAKKVTHVLKSNSWLNC</sequence>